<evidence type="ECO:0000255" key="1">
    <source>
        <dbReference type="HAMAP-Rule" id="MF_00795"/>
    </source>
</evidence>
<accession>A6UF02</accession>
<name>CUTC_SINMW</name>
<protein>
    <recommendedName>
        <fullName evidence="1">PF03932 family protein CutC</fullName>
    </recommendedName>
</protein>
<reference key="1">
    <citation type="submission" date="2007-06" db="EMBL/GenBank/DDBJ databases">
        <title>Complete sequence of Sinorhizobium medicae WSM419 chromosome.</title>
        <authorList>
            <consortium name="US DOE Joint Genome Institute"/>
            <person name="Copeland A."/>
            <person name="Lucas S."/>
            <person name="Lapidus A."/>
            <person name="Barry K."/>
            <person name="Glavina del Rio T."/>
            <person name="Dalin E."/>
            <person name="Tice H."/>
            <person name="Pitluck S."/>
            <person name="Chain P."/>
            <person name="Malfatti S."/>
            <person name="Shin M."/>
            <person name="Vergez L."/>
            <person name="Schmutz J."/>
            <person name="Larimer F."/>
            <person name="Land M."/>
            <person name="Hauser L."/>
            <person name="Kyrpides N."/>
            <person name="Mikhailova N."/>
            <person name="Reeve W.G."/>
            <person name="Richardson P."/>
        </authorList>
    </citation>
    <scope>NUCLEOTIDE SEQUENCE [LARGE SCALE GENOMIC DNA]</scope>
    <source>
        <strain>WSM419</strain>
    </source>
</reference>
<gene>
    <name evidence="1" type="primary">cutC</name>
    <name type="ordered locus">Smed_3411</name>
</gene>
<comment type="subcellular location">
    <subcellularLocation>
        <location evidence="1">Cytoplasm</location>
    </subcellularLocation>
</comment>
<comment type="similarity">
    <text evidence="1">Belongs to the CutC family.</text>
</comment>
<comment type="caution">
    <text evidence="1">Once thought to be involved in copper homeostasis, experiments in E.coli have shown this is not the case.</text>
</comment>
<feature type="chain" id="PRO_1000046944" description="PF03932 family protein CutC">
    <location>
        <begin position="1"/>
        <end position="245"/>
    </location>
</feature>
<proteinExistence type="inferred from homology"/>
<sequence>MNRILLEVCVDDPDGLEAAVAGGADRVELCSALCAGGLTPSPGLMSAAGMPPVPVYAMIRPRAGDFVYDAADLEVMRRDIDAARAAGLAGVVLGASRADGRLDARMLTKLAGHAAGMGLTLHRAFDLVPDFAEALEIAVELGFERILTSGGAKTAPEAVEILEKLIAAASGRISIMPGSGITSNTAGTLLPRLAIAEVHSSCSTSEPANDMRLVEMGFAAPERRRTDAAKIRAMRACLDALAAKA</sequence>
<dbReference type="EMBL" id="CP000738">
    <property type="protein sequence ID" value="ABR62232.1"/>
    <property type="molecule type" value="Genomic_DNA"/>
</dbReference>
<dbReference type="RefSeq" id="WP_012067613.1">
    <property type="nucleotide sequence ID" value="NC_009636.1"/>
</dbReference>
<dbReference type="RefSeq" id="YP_001329067.1">
    <property type="nucleotide sequence ID" value="NC_009636.1"/>
</dbReference>
<dbReference type="SMR" id="A6UF02"/>
<dbReference type="STRING" id="366394.Smed_3411"/>
<dbReference type="KEGG" id="smd:Smed_3411"/>
<dbReference type="PATRIC" id="fig|366394.8.peg.6658"/>
<dbReference type="eggNOG" id="COG3142">
    <property type="taxonomic scope" value="Bacteria"/>
</dbReference>
<dbReference type="HOGENOM" id="CLU_050555_3_3_5"/>
<dbReference type="OrthoDB" id="9815677at2"/>
<dbReference type="Proteomes" id="UP000001108">
    <property type="component" value="Chromosome"/>
</dbReference>
<dbReference type="GO" id="GO:0005737">
    <property type="term" value="C:cytoplasm"/>
    <property type="evidence" value="ECO:0007669"/>
    <property type="project" value="UniProtKB-SubCell"/>
</dbReference>
<dbReference type="GO" id="GO:0005507">
    <property type="term" value="F:copper ion binding"/>
    <property type="evidence" value="ECO:0007669"/>
    <property type="project" value="TreeGrafter"/>
</dbReference>
<dbReference type="Gene3D" id="3.20.20.380">
    <property type="entry name" value="Copper homeostasis (CutC) domain"/>
    <property type="match status" value="1"/>
</dbReference>
<dbReference type="HAMAP" id="MF_00795">
    <property type="entry name" value="CutC"/>
    <property type="match status" value="1"/>
</dbReference>
<dbReference type="InterPro" id="IPR005627">
    <property type="entry name" value="CutC-like"/>
</dbReference>
<dbReference type="InterPro" id="IPR036822">
    <property type="entry name" value="CutC-like_dom_sf"/>
</dbReference>
<dbReference type="PANTHER" id="PTHR12598">
    <property type="entry name" value="COPPER HOMEOSTASIS PROTEIN CUTC"/>
    <property type="match status" value="1"/>
</dbReference>
<dbReference type="PANTHER" id="PTHR12598:SF0">
    <property type="entry name" value="COPPER HOMEOSTASIS PROTEIN CUTC HOMOLOG"/>
    <property type="match status" value="1"/>
</dbReference>
<dbReference type="Pfam" id="PF03932">
    <property type="entry name" value="CutC"/>
    <property type="match status" value="1"/>
</dbReference>
<dbReference type="SUPFAM" id="SSF110395">
    <property type="entry name" value="CutC-like"/>
    <property type="match status" value="1"/>
</dbReference>
<keyword id="KW-0963">Cytoplasm</keyword>
<organism>
    <name type="scientific">Sinorhizobium medicae (strain WSM419)</name>
    <name type="common">Ensifer medicae</name>
    <dbReference type="NCBI Taxonomy" id="366394"/>
    <lineage>
        <taxon>Bacteria</taxon>
        <taxon>Pseudomonadati</taxon>
        <taxon>Pseudomonadota</taxon>
        <taxon>Alphaproteobacteria</taxon>
        <taxon>Hyphomicrobiales</taxon>
        <taxon>Rhizobiaceae</taxon>
        <taxon>Sinorhizobium/Ensifer group</taxon>
        <taxon>Sinorhizobium</taxon>
    </lineage>
</organism>